<sequence>MKTVARALSGSARAMARKPMRFTDLRTVQLRPPIVPTHRNFEVSPDHPLWAFFPDGNNSQTCYREASDLDIQSRAWTTAELRRKSFEDLHQLWYLVLKERNVLAREVRLADAINERNTHVHDQVDEKLLLTQKRIKQVLLERQTAFERVQTFTQQQQEYLEEFRQRYLDADASQIASYNEKLIRLQYAFFGIQPQLEDYNWETDINERFVDGLNYVSHIKLARYFAQNPDVEEEIGYPLKGVVEELPFLLRDPSEAVEEVRALRQSGAQVKLDKIDVLPFLRSALQAALEQEGRM</sequence>
<protein>
    <recommendedName>
        <fullName evidence="3">Large ribosomal subunit protein uL29m</fullName>
    </recommendedName>
    <alternativeName>
        <fullName>54S ribosomal protein L4, mitochondrial</fullName>
    </alternativeName>
</protein>
<accession>A5DH98</accession>
<evidence type="ECO:0000250" key="1"/>
<evidence type="ECO:0000255" key="2"/>
<evidence type="ECO:0000305" key="3"/>
<reference key="1">
    <citation type="journal article" date="2009" name="Nature">
        <title>Evolution of pathogenicity and sexual reproduction in eight Candida genomes.</title>
        <authorList>
            <person name="Butler G."/>
            <person name="Rasmussen M.D."/>
            <person name="Lin M.F."/>
            <person name="Santos M.A.S."/>
            <person name="Sakthikumar S."/>
            <person name="Munro C.A."/>
            <person name="Rheinbay E."/>
            <person name="Grabherr M."/>
            <person name="Forche A."/>
            <person name="Reedy J.L."/>
            <person name="Agrafioti I."/>
            <person name="Arnaud M.B."/>
            <person name="Bates S."/>
            <person name="Brown A.J.P."/>
            <person name="Brunke S."/>
            <person name="Costanzo M.C."/>
            <person name="Fitzpatrick D.A."/>
            <person name="de Groot P.W.J."/>
            <person name="Harris D."/>
            <person name="Hoyer L.L."/>
            <person name="Hube B."/>
            <person name="Klis F.M."/>
            <person name="Kodira C."/>
            <person name="Lennard N."/>
            <person name="Logue M.E."/>
            <person name="Martin R."/>
            <person name="Neiman A.M."/>
            <person name="Nikolaou E."/>
            <person name="Quail M.A."/>
            <person name="Quinn J."/>
            <person name="Santos M.C."/>
            <person name="Schmitzberger F.F."/>
            <person name="Sherlock G."/>
            <person name="Shah P."/>
            <person name="Silverstein K.A.T."/>
            <person name="Skrzypek M.S."/>
            <person name="Soll D."/>
            <person name="Staggs R."/>
            <person name="Stansfield I."/>
            <person name="Stumpf M.P.H."/>
            <person name="Sudbery P.E."/>
            <person name="Srikantha T."/>
            <person name="Zeng Q."/>
            <person name="Berman J."/>
            <person name="Berriman M."/>
            <person name="Heitman J."/>
            <person name="Gow N.A.R."/>
            <person name="Lorenz M.C."/>
            <person name="Birren B.W."/>
            <person name="Kellis M."/>
            <person name="Cuomo C.A."/>
        </authorList>
    </citation>
    <scope>NUCLEOTIDE SEQUENCE [LARGE SCALE GENOMIC DNA]</scope>
    <source>
        <strain>ATCC 6260 / CBS 566 / DSM 6381 / JCM 1539 / NBRC 10279 / NRRL Y-324</strain>
    </source>
</reference>
<feature type="transit peptide" description="Mitochondrion" evidence="2">
    <location>
        <begin position="1"/>
        <end status="unknown"/>
    </location>
</feature>
<feature type="chain" id="PRO_0000372409" description="Large ribosomal subunit protein uL29m">
    <location>
        <begin status="unknown"/>
        <end position="295"/>
    </location>
</feature>
<name>RM04_PICGU</name>
<dbReference type="EMBL" id="CH408157">
    <property type="protein sequence ID" value="EDK38551.2"/>
    <property type="molecule type" value="Genomic_DNA"/>
</dbReference>
<dbReference type="RefSeq" id="XP_001484920.1">
    <property type="nucleotide sequence ID" value="XM_001484870.1"/>
</dbReference>
<dbReference type="SMR" id="A5DH98"/>
<dbReference type="FunCoup" id="A5DH98">
    <property type="interactions" value="230"/>
</dbReference>
<dbReference type="STRING" id="294746.A5DH98"/>
<dbReference type="GeneID" id="5127005"/>
<dbReference type="KEGG" id="pgu:PGUG_02649"/>
<dbReference type="VEuPathDB" id="FungiDB:PGUG_02649"/>
<dbReference type="eggNOG" id="KOG3331">
    <property type="taxonomic scope" value="Eukaryota"/>
</dbReference>
<dbReference type="HOGENOM" id="CLU_872105_0_0_1"/>
<dbReference type="InParanoid" id="A5DH98"/>
<dbReference type="OMA" id="IRTTMWR"/>
<dbReference type="OrthoDB" id="270763at2759"/>
<dbReference type="Proteomes" id="UP000001997">
    <property type="component" value="Unassembled WGS sequence"/>
</dbReference>
<dbReference type="GO" id="GO:0005762">
    <property type="term" value="C:mitochondrial large ribosomal subunit"/>
    <property type="evidence" value="ECO:0007669"/>
    <property type="project" value="TreeGrafter"/>
</dbReference>
<dbReference type="GO" id="GO:0003735">
    <property type="term" value="F:structural constituent of ribosome"/>
    <property type="evidence" value="ECO:0007669"/>
    <property type="project" value="InterPro"/>
</dbReference>
<dbReference type="GO" id="GO:0032543">
    <property type="term" value="P:mitochondrial translation"/>
    <property type="evidence" value="ECO:0007669"/>
    <property type="project" value="TreeGrafter"/>
</dbReference>
<dbReference type="Gene3D" id="6.10.140.1190">
    <property type="match status" value="1"/>
</dbReference>
<dbReference type="Gene3D" id="6.10.330.20">
    <property type="match status" value="1"/>
</dbReference>
<dbReference type="InterPro" id="IPR038340">
    <property type="entry name" value="MRP-L47_sf"/>
</dbReference>
<dbReference type="InterPro" id="IPR010729">
    <property type="entry name" value="Ribosomal_uL29_mit"/>
</dbReference>
<dbReference type="PANTHER" id="PTHR21183:SF18">
    <property type="entry name" value="LARGE RIBOSOMAL SUBUNIT PROTEIN UL29M"/>
    <property type="match status" value="1"/>
</dbReference>
<dbReference type="PANTHER" id="PTHR21183">
    <property type="entry name" value="RIBOSOMAL PROTEIN L47, MITOCHONDRIAL-RELATED"/>
    <property type="match status" value="1"/>
</dbReference>
<dbReference type="Pfam" id="PF06984">
    <property type="entry name" value="MRP-L47"/>
    <property type="match status" value="1"/>
</dbReference>
<gene>
    <name type="primary">MRPL4</name>
    <name type="ORF">PGUG_02649</name>
</gene>
<keyword id="KW-0496">Mitochondrion</keyword>
<keyword id="KW-1185">Reference proteome</keyword>
<keyword id="KW-0687">Ribonucleoprotein</keyword>
<keyword id="KW-0689">Ribosomal protein</keyword>
<keyword id="KW-0809">Transit peptide</keyword>
<organism>
    <name type="scientific">Meyerozyma guilliermondii (strain ATCC 6260 / CBS 566 / DSM 6381 / JCM 1539 / NBRC 10279 / NRRL Y-324)</name>
    <name type="common">Yeast</name>
    <name type="synonym">Candida guilliermondii</name>
    <dbReference type="NCBI Taxonomy" id="294746"/>
    <lineage>
        <taxon>Eukaryota</taxon>
        <taxon>Fungi</taxon>
        <taxon>Dikarya</taxon>
        <taxon>Ascomycota</taxon>
        <taxon>Saccharomycotina</taxon>
        <taxon>Pichiomycetes</taxon>
        <taxon>Debaryomycetaceae</taxon>
        <taxon>Meyerozyma</taxon>
    </lineage>
</organism>
<comment type="subunit">
    <text evidence="1">Component of the mitochondrial large ribosomal subunit. Mature mitochondrial ribosomes consist of a small (37S) and a large (54S) subunit. The 37S subunit contains at least 33 different proteins and 1 molecule of RNA (15S). The 54S subunit contains at least 45 different proteins and 1 molecule of RNA (21S) (By similarity).</text>
</comment>
<comment type="subcellular location">
    <subcellularLocation>
        <location evidence="1">Mitochondrion</location>
    </subcellularLocation>
</comment>
<comment type="similarity">
    <text evidence="3">Belongs to the universal ribosomal protein uL29 family.</text>
</comment>
<proteinExistence type="inferred from homology"/>